<reference key="1">
    <citation type="journal article" date="2003" name="Nat. Genet.">
        <title>Comparative analysis of the genome sequences of Bordetella pertussis, Bordetella parapertussis and Bordetella bronchiseptica.</title>
        <authorList>
            <person name="Parkhill J."/>
            <person name="Sebaihia M."/>
            <person name="Preston A."/>
            <person name="Murphy L.D."/>
            <person name="Thomson N.R."/>
            <person name="Harris D.E."/>
            <person name="Holden M.T.G."/>
            <person name="Churcher C.M."/>
            <person name="Bentley S.D."/>
            <person name="Mungall K.L."/>
            <person name="Cerdeno-Tarraga A.-M."/>
            <person name="Temple L."/>
            <person name="James K.D."/>
            <person name="Harris B."/>
            <person name="Quail M.A."/>
            <person name="Achtman M."/>
            <person name="Atkin R."/>
            <person name="Baker S."/>
            <person name="Basham D."/>
            <person name="Bason N."/>
            <person name="Cherevach I."/>
            <person name="Chillingworth T."/>
            <person name="Collins M."/>
            <person name="Cronin A."/>
            <person name="Davis P."/>
            <person name="Doggett J."/>
            <person name="Feltwell T."/>
            <person name="Goble A."/>
            <person name="Hamlin N."/>
            <person name="Hauser H."/>
            <person name="Holroyd S."/>
            <person name="Jagels K."/>
            <person name="Leather S."/>
            <person name="Moule S."/>
            <person name="Norberczak H."/>
            <person name="O'Neil S."/>
            <person name="Ormond D."/>
            <person name="Price C."/>
            <person name="Rabbinowitsch E."/>
            <person name="Rutter S."/>
            <person name="Sanders M."/>
            <person name="Saunders D."/>
            <person name="Seeger K."/>
            <person name="Sharp S."/>
            <person name="Simmonds M."/>
            <person name="Skelton J."/>
            <person name="Squares R."/>
            <person name="Squares S."/>
            <person name="Stevens K."/>
            <person name="Unwin L."/>
            <person name="Whitehead S."/>
            <person name="Barrell B.G."/>
            <person name="Maskell D.J."/>
        </authorList>
    </citation>
    <scope>NUCLEOTIDE SEQUENCE [LARGE SCALE GENOMIC DNA]</scope>
    <source>
        <strain>12822 / ATCC BAA-587 / NCTC 13253</strain>
    </source>
</reference>
<gene>
    <name evidence="1" type="primary">coaD</name>
    <name type="ordered locus">BPP0847</name>
</gene>
<proteinExistence type="inferred from homology"/>
<protein>
    <recommendedName>
        <fullName evidence="1">Phosphopantetheine adenylyltransferase</fullName>
        <ecNumber evidence="1">2.7.7.3</ecNumber>
    </recommendedName>
    <alternativeName>
        <fullName evidence="1">Dephospho-CoA pyrophosphorylase</fullName>
    </alternativeName>
    <alternativeName>
        <fullName evidence="1">Pantetheine-phosphate adenylyltransferase</fullName>
        <shortName evidence="1">PPAT</shortName>
    </alternativeName>
</protein>
<feature type="chain" id="PRO_0000156179" description="Phosphopantetheine adenylyltransferase">
    <location>
        <begin position="1"/>
        <end position="169"/>
    </location>
</feature>
<feature type="binding site" evidence="1">
    <location>
        <begin position="9"/>
        <end position="10"/>
    </location>
    <ligand>
        <name>ATP</name>
        <dbReference type="ChEBI" id="CHEBI:30616"/>
    </ligand>
</feature>
<feature type="binding site" evidence="1">
    <location>
        <position position="9"/>
    </location>
    <ligand>
        <name>substrate</name>
    </ligand>
</feature>
<feature type="binding site" evidence="1">
    <location>
        <position position="17"/>
    </location>
    <ligand>
        <name>ATP</name>
        <dbReference type="ChEBI" id="CHEBI:30616"/>
    </ligand>
</feature>
<feature type="binding site" evidence="1">
    <location>
        <position position="41"/>
    </location>
    <ligand>
        <name>substrate</name>
    </ligand>
</feature>
<feature type="binding site" evidence="1">
    <location>
        <position position="73"/>
    </location>
    <ligand>
        <name>substrate</name>
    </ligand>
</feature>
<feature type="binding site" evidence="1">
    <location>
        <position position="87"/>
    </location>
    <ligand>
        <name>substrate</name>
    </ligand>
</feature>
<feature type="binding site" evidence="1">
    <location>
        <begin position="88"/>
        <end position="90"/>
    </location>
    <ligand>
        <name>ATP</name>
        <dbReference type="ChEBI" id="CHEBI:30616"/>
    </ligand>
</feature>
<feature type="binding site" evidence="1">
    <location>
        <position position="98"/>
    </location>
    <ligand>
        <name>ATP</name>
        <dbReference type="ChEBI" id="CHEBI:30616"/>
    </ligand>
</feature>
<feature type="binding site" evidence="1">
    <location>
        <begin position="123"/>
        <end position="129"/>
    </location>
    <ligand>
        <name>ATP</name>
        <dbReference type="ChEBI" id="CHEBI:30616"/>
    </ligand>
</feature>
<feature type="site" description="Transition state stabilizer" evidence="1">
    <location>
        <position position="17"/>
    </location>
</feature>
<evidence type="ECO:0000255" key="1">
    <source>
        <dbReference type="HAMAP-Rule" id="MF_00151"/>
    </source>
</evidence>
<keyword id="KW-0067">ATP-binding</keyword>
<keyword id="KW-0173">Coenzyme A biosynthesis</keyword>
<keyword id="KW-0963">Cytoplasm</keyword>
<keyword id="KW-0460">Magnesium</keyword>
<keyword id="KW-0547">Nucleotide-binding</keyword>
<keyword id="KW-0548">Nucleotidyltransferase</keyword>
<keyword id="KW-0808">Transferase</keyword>
<organism>
    <name type="scientific">Bordetella parapertussis (strain 12822 / ATCC BAA-587 / NCTC 13253)</name>
    <dbReference type="NCBI Taxonomy" id="257311"/>
    <lineage>
        <taxon>Bacteria</taxon>
        <taxon>Pseudomonadati</taxon>
        <taxon>Pseudomonadota</taxon>
        <taxon>Betaproteobacteria</taxon>
        <taxon>Burkholderiales</taxon>
        <taxon>Alcaligenaceae</taxon>
        <taxon>Bordetella</taxon>
    </lineage>
</organism>
<dbReference type="EC" id="2.7.7.3" evidence="1"/>
<dbReference type="EMBL" id="BX640425">
    <property type="protein sequence ID" value="CAE40256.1"/>
    <property type="molecule type" value="Genomic_DNA"/>
</dbReference>
<dbReference type="RefSeq" id="WP_003808574.1">
    <property type="nucleotide sequence ID" value="NC_002928.3"/>
</dbReference>
<dbReference type="SMR" id="Q7W154"/>
<dbReference type="GeneID" id="93202597"/>
<dbReference type="KEGG" id="bpa:BPP0847"/>
<dbReference type="HOGENOM" id="CLU_100149_0_1_4"/>
<dbReference type="UniPathway" id="UPA00241">
    <property type="reaction ID" value="UER00355"/>
</dbReference>
<dbReference type="Proteomes" id="UP000001421">
    <property type="component" value="Chromosome"/>
</dbReference>
<dbReference type="GO" id="GO:0005737">
    <property type="term" value="C:cytoplasm"/>
    <property type="evidence" value="ECO:0007669"/>
    <property type="project" value="UniProtKB-SubCell"/>
</dbReference>
<dbReference type="GO" id="GO:0005524">
    <property type="term" value="F:ATP binding"/>
    <property type="evidence" value="ECO:0007669"/>
    <property type="project" value="UniProtKB-KW"/>
</dbReference>
<dbReference type="GO" id="GO:0004595">
    <property type="term" value="F:pantetheine-phosphate adenylyltransferase activity"/>
    <property type="evidence" value="ECO:0007669"/>
    <property type="project" value="UniProtKB-UniRule"/>
</dbReference>
<dbReference type="GO" id="GO:0015937">
    <property type="term" value="P:coenzyme A biosynthetic process"/>
    <property type="evidence" value="ECO:0007669"/>
    <property type="project" value="UniProtKB-UniRule"/>
</dbReference>
<dbReference type="CDD" id="cd02163">
    <property type="entry name" value="PPAT"/>
    <property type="match status" value="1"/>
</dbReference>
<dbReference type="Gene3D" id="3.40.50.620">
    <property type="entry name" value="HUPs"/>
    <property type="match status" value="1"/>
</dbReference>
<dbReference type="HAMAP" id="MF_00151">
    <property type="entry name" value="PPAT_bact"/>
    <property type="match status" value="1"/>
</dbReference>
<dbReference type="InterPro" id="IPR004821">
    <property type="entry name" value="Cyt_trans-like"/>
</dbReference>
<dbReference type="InterPro" id="IPR001980">
    <property type="entry name" value="PPAT"/>
</dbReference>
<dbReference type="InterPro" id="IPR014729">
    <property type="entry name" value="Rossmann-like_a/b/a_fold"/>
</dbReference>
<dbReference type="NCBIfam" id="TIGR01510">
    <property type="entry name" value="coaD_prev_kdtB"/>
    <property type="match status" value="1"/>
</dbReference>
<dbReference type="NCBIfam" id="TIGR00125">
    <property type="entry name" value="cyt_tran_rel"/>
    <property type="match status" value="1"/>
</dbReference>
<dbReference type="PANTHER" id="PTHR21342">
    <property type="entry name" value="PHOSPHOPANTETHEINE ADENYLYLTRANSFERASE"/>
    <property type="match status" value="1"/>
</dbReference>
<dbReference type="PANTHER" id="PTHR21342:SF1">
    <property type="entry name" value="PHOSPHOPANTETHEINE ADENYLYLTRANSFERASE"/>
    <property type="match status" value="1"/>
</dbReference>
<dbReference type="Pfam" id="PF01467">
    <property type="entry name" value="CTP_transf_like"/>
    <property type="match status" value="1"/>
</dbReference>
<dbReference type="PRINTS" id="PR01020">
    <property type="entry name" value="LPSBIOSNTHSS"/>
</dbReference>
<dbReference type="SUPFAM" id="SSF52374">
    <property type="entry name" value="Nucleotidylyl transferase"/>
    <property type="match status" value="1"/>
</dbReference>
<accession>Q7W154</accession>
<sequence>MIIAVYPGTFDPLTRGHEDLVRRAATLFDKVVVGIAHSRNKKPFFTIEERVDIAREVLGHYPNVEVHSFGGLLKDFVRDQNGRVIIRGLRAVSDFEYEFQMAGMNRHLLPDVETMFMTPSDQYQFISGTIVREIAQLGGDVSKFVFPSVERWLQAKAKERREQSAQGGA</sequence>
<name>COAD_BORPA</name>
<comment type="function">
    <text evidence="1">Reversibly transfers an adenylyl group from ATP to 4'-phosphopantetheine, yielding dephospho-CoA (dPCoA) and pyrophosphate.</text>
</comment>
<comment type="catalytic activity">
    <reaction evidence="1">
        <text>(R)-4'-phosphopantetheine + ATP + H(+) = 3'-dephospho-CoA + diphosphate</text>
        <dbReference type="Rhea" id="RHEA:19801"/>
        <dbReference type="ChEBI" id="CHEBI:15378"/>
        <dbReference type="ChEBI" id="CHEBI:30616"/>
        <dbReference type="ChEBI" id="CHEBI:33019"/>
        <dbReference type="ChEBI" id="CHEBI:57328"/>
        <dbReference type="ChEBI" id="CHEBI:61723"/>
        <dbReference type="EC" id="2.7.7.3"/>
    </reaction>
</comment>
<comment type="cofactor">
    <cofactor evidence="1">
        <name>Mg(2+)</name>
        <dbReference type="ChEBI" id="CHEBI:18420"/>
    </cofactor>
</comment>
<comment type="pathway">
    <text evidence="1">Cofactor biosynthesis; coenzyme A biosynthesis; CoA from (R)-pantothenate: step 4/5.</text>
</comment>
<comment type="subunit">
    <text evidence="1">Homohexamer.</text>
</comment>
<comment type="subcellular location">
    <subcellularLocation>
        <location evidence="1">Cytoplasm</location>
    </subcellularLocation>
</comment>
<comment type="similarity">
    <text evidence="1">Belongs to the bacterial CoaD family.</text>
</comment>